<reference key="1">
    <citation type="journal article" date="2000" name="Nature">
        <title>Complete genome sequence of Pseudomonas aeruginosa PAO1, an opportunistic pathogen.</title>
        <authorList>
            <person name="Stover C.K."/>
            <person name="Pham X.-Q.T."/>
            <person name="Erwin A.L."/>
            <person name="Mizoguchi S.D."/>
            <person name="Warrener P."/>
            <person name="Hickey M.J."/>
            <person name="Brinkman F.S.L."/>
            <person name="Hufnagle W.O."/>
            <person name="Kowalik D.J."/>
            <person name="Lagrou M."/>
            <person name="Garber R.L."/>
            <person name="Goltry L."/>
            <person name="Tolentino E."/>
            <person name="Westbrock-Wadman S."/>
            <person name="Yuan Y."/>
            <person name="Brody L.L."/>
            <person name="Coulter S.N."/>
            <person name="Folger K.R."/>
            <person name="Kas A."/>
            <person name="Larbig K."/>
            <person name="Lim R.M."/>
            <person name="Smith K.A."/>
            <person name="Spencer D.H."/>
            <person name="Wong G.K.-S."/>
            <person name="Wu Z."/>
            <person name="Paulsen I.T."/>
            <person name="Reizer J."/>
            <person name="Saier M.H. Jr."/>
            <person name="Hancock R.E.W."/>
            <person name="Lory S."/>
            <person name="Olson M.V."/>
        </authorList>
    </citation>
    <scope>NUCLEOTIDE SEQUENCE [LARGE SCALE GENOMIC DNA]</scope>
    <source>
        <strain>ATCC 15692 / DSM 22644 / CIP 104116 / JCM 14847 / LMG 12228 / 1C / PRS 101 / PAO1</strain>
    </source>
</reference>
<dbReference type="EMBL" id="AE004091">
    <property type="protein sequence ID" value="AAG06143.1"/>
    <property type="molecule type" value="Genomic_DNA"/>
</dbReference>
<dbReference type="PIR" id="B83302">
    <property type="entry name" value="B83302"/>
</dbReference>
<dbReference type="RefSeq" id="NP_251445.1">
    <property type="nucleotide sequence ID" value="NC_002516.2"/>
</dbReference>
<dbReference type="RefSeq" id="WP_003114416.1">
    <property type="nucleotide sequence ID" value="NZ_QZGE01000011.1"/>
</dbReference>
<dbReference type="SMR" id="Q9I088"/>
<dbReference type="FunCoup" id="Q9I088">
    <property type="interactions" value="23"/>
</dbReference>
<dbReference type="STRING" id="208964.PA2755"/>
<dbReference type="MEROPS" id="I11.003"/>
<dbReference type="PaxDb" id="208964-PA2755"/>
<dbReference type="DNASU" id="882725"/>
<dbReference type="GeneID" id="882725"/>
<dbReference type="KEGG" id="pae:PA2755"/>
<dbReference type="PATRIC" id="fig|208964.12.peg.2889"/>
<dbReference type="PseudoCAP" id="PA2755"/>
<dbReference type="HOGENOM" id="CLU_111565_0_0_6"/>
<dbReference type="InParanoid" id="Q9I088"/>
<dbReference type="OrthoDB" id="997196at2"/>
<dbReference type="PhylomeDB" id="Q9I088"/>
<dbReference type="BioCyc" id="PAER208964:G1FZ6-2800-MONOMER"/>
<dbReference type="Proteomes" id="UP000002438">
    <property type="component" value="Chromosome"/>
</dbReference>
<dbReference type="GO" id="GO:0030288">
    <property type="term" value="C:outer membrane-bounded periplasmic space"/>
    <property type="evidence" value="ECO:0000318"/>
    <property type="project" value="GO_Central"/>
</dbReference>
<dbReference type="GO" id="GO:0004867">
    <property type="term" value="F:serine-type endopeptidase inhibitor activity"/>
    <property type="evidence" value="ECO:0000318"/>
    <property type="project" value="GO_Central"/>
</dbReference>
<dbReference type="CDD" id="cd00242">
    <property type="entry name" value="Ecotin"/>
    <property type="match status" value="1"/>
</dbReference>
<dbReference type="Gene3D" id="2.60.40.550">
    <property type="entry name" value="Ecotin"/>
    <property type="match status" value="1"/>
</dbReference>
<dbReference type="Gene3D" id="4.10.1230.10">
    <property type="entry name" value="Ecotin, trypsin inhibitor"/>
    <property type="match status" value="1"/>
</dbReference>
<dbReference type="HAMAP" id="MF_00706">
    <property type="entry name" value="Ecotin"/>
    <property type="match status" value="1"/>
</dbReference>
<dbReference type="InterPro" id="IPR027438">
    <property type="entry name" value="Ecotin_C"/>
</dbReference>
<dbReference type="InterPro" id="IPR036198">
    <property type="entry name" value="Ecotin_sf"/>
</dbReference>
<dbReference type="InterPro" id="IPR005658">
    <property type="entry name" value="Prot_inh_ecotin"/>
</dbReference>
<dbReference type="InterPro" id="IPR023084">
    <property type="entry name" value="Prot_inh_ecotin_gammaproteobac"/>
</dbReference>
<dbReference type="NCBIfam" id="NF002987">
    <property type="entry name" value="PRK03719.1"/>
    <property type="match status" value="1"/>
</dbReference>
<dbReference type="PANTHER" id="PTHR35890">
    <property type="match status" value="1"/>
</dbReference>
<dbReference type="PANTHER" id="PTHR35890:SF3">
    <property type="entry name" value="ECOTIN"/>
    <property type="match status" value="1"/>
</dbReference>
<dbReference type="Pfam" id="PF03974">
    <property type="entry name" value="Ecotin"/>
    <property type="match status" value="1"/>
</dbReference>
<dbReference type="PIRSF" id="PIRSF006865">
    <property type="entry name" value="Prot_inh_ecotin"/>
    <property type="match status" value="1"/>
</dbReference>
<dbReference type="SUPFAM" id="SSF49772">
    <property type="entry name" value="Ecotin, trypsin inhibitor"/>
    <property type="match status" value="1"/>
</dbReference>
<protein>
    <recommendedName>
        <fullName evidence="1">Ecotin</fullName>
    </recommendedName>
</protein>
<keyword id="KW-1015">Disulfide bond</keyword>
<keyword id="KW-0574">Periplasm</keyword>
<keyword id="KW-0646">Protease inhibitor</keyword>
<keyword id="KW-1185">Reference proteome</keyword>
<keyword id="KW-0722">Serine protease inhibitor</keyword>
<keyword id="KW-0732">Signal</keyword>
<accession>Q9I088</accession>
<name>ECOT_PSEAE</name>
<comment type="function">
    <text evidence="1">General inhibitor of family S1 serine proteases.</text>
</comment>
<comment type="subunit">
    <text evidence="1">Homodimer.</text>
</comment>
<comment type="subcellular location">
    <subcellularLocation>
        <location evidence="1">Periplasm</location>
    </subcellularLocation>
</comment>
<comment type="similarity">
    <text evidence="1">Belongs to the protease inhibitor I11 (ecotin) family.</text>
</comment>
<organism>
    <name type="scientific">Pseudomonas aeruginosa (strain ATCC 15692 / DSM 22644 / CIP 104116 / JCM 14847 / LMG 12228 / 1C / PRS 101 / PAO1)</name>
    <dbReference type="NCBI Taxonomy" id="208964"/>
    <lineage>
        <taxon>Bacteria</taxon>
        <taxon>Pseudomonadati</taxon>
        <taxon>Pseudomonadota</taxon>
        <taxon>Gammaproteobacteria</taxon>
        <taxon>Pseudomonadales</taxon>
        <taxon>Pseudomonadaceae</taxon>
        <taxon>Pseudomonas</taxon>
    </lineage>
</organism>
<feature type="signal peptide" evidence="1">
    <location>
        <begin position="1"/>
        <end position="19"/>
    </location>
</feature>
<feature type="chain" id="PRO_0000007427" description="Ecotin">
    <location>
        <begin position="20"/>
        <end position="156"/>
    </location>
</feature>
<feature type="site" description="Reactive bond" evidence="1">
    <location>
        <begin position="99"/>
        <end position="100"/>
    </location>
</feature>
<feature type="disulfide bond" evidence="1">
    <location>
        <begin position="65"/>
        <end position="102"/>
    </location>
</feature>
<evidence type="ECO:0000255" key="1">
    <source>
        <dbReference type="HAMAP-Rule" id="MF_00706"/>
    </source>
</evidence>
<sequence>MKALLIAAGVAALSSTAMAAKLDEKVPYPKADAGFTRQVIHLPKQDAEDAFKVEIIAGKTLEADCNQQRLGGELEEHTLEGWGYSYYRLDKVSGPMSTMMACPGQKKEQRFIPVVGEGFLLCYNSKLPIVVYAPKDVEVRYRIWSASEKVEKAVSE</sequence>
<proteinExistence type="inferred from homology"/>
<gene>
    <name evidence="1" type="primary">eco</name>
    <name type="ordered locus">PA2755</name>
</gene>